<name>METE_HAEIE</name>
<dbReference type="EC" id="2.1.1.14" evidence="1"/>
<dbReference type="EMBL" id="CP000671">
    <property type="protein sequence ID" value="ABQ98125.1"/>
    <property type="molecule type" value="Genomic_DNA"/>
</dbReference>
<dbReference type="SMR" id="A5UBH4"/>
<dbReference type="KEGG" id="hip:CGSHiEE_03520"/>
<dbReference type="HOGENOM" id="CLU_013175_0_0_6"/>
<dbReference type="UniPathway" id="UPA00051">
    <property type="reaction ID" value="UER00082"/>
</dbReference>
<dbReference type="GO" id="GO:0003871">
    <property type="term" value="F:5-methyltetrahydropteroyltriglutamate-homocysteine S-methyltransferase activity"/>
    <property type="evidence" value="ECO:0007669"/>
    <property type="project" value="UniProtKB-UniRule"/>
</dbReference>
<dbReference type="GO" id="GO:0008270">
    <property type="term" value="F:zinc ion binding"/>
    <property type="evidence" value="ECO:0007669"/>
    <property type="project" value="InterPro"/>
</dbReference>
<dbReference type="GO" id="GO:0009086">
    <property type="term" value="P:methionine biosynthetic process"/>
    <property type="evidence" value="ECO:0007669"/>
    <property type="project" value="UniProtKB-UniRule"/>
</dbReference>
<dbReference type="GO" id="GO:0032259">
    <property type="term" value="P:methylation"/>
    <property type="evidence" value="ECO:0007669"/>
    <property type="project" value="UniProtKB-KW"/>
</dbReference>
<dbReference type="CDD" id="cd03311">
    <property type="entry name" value="CIMS_C_terminal_like"/>
    <property type="match status" value="1"/>
</dbReference>
<dbReference type="CDD" id="cd03312">
    <property type="entry name" value="CIMS_N_terminal_like"/>
    <property type="match status" value="1"/>
</dbReference>
<dbReference type="FunFam" id="3.20.20.210:FF:000002">
    <property type="entry name" value="5-methyltetrahydropteroyltriglutamate--homocysteine methyltransferase"/>
    <property type="match status" value="1"/>
</dbReference>
<dbReference type="Gene3D" id="3.20.20.210">
    <property type="match status" value="2"/>
</dbReference>
<dbReference type="HAMAP" id="MF_00172">
    <property type="entry name" value="Meth_synth"/>
    <property type="match status" value="1"/>
</dbReference>
<dbReference type="InterPro" id="IPR013215">
    <property type="entry name" value="Cbl-indep_Met_Synth_N"/>
</dbReference>
<dbReference type="InterPro" id="IPR006276">
    <property type="entry name" value="Cobalamin-indep_Met_synthase"/>
</dbReference>
<dbReference type="InterPro" id="IPR002629">
    <property type="entry name" value="Met_Synth_C/arc"/>
</dbReference>
<dbReference type="InterPro" id="IPR038071">
    <property type="entry name" value="UROD/MetE-like_sf"/>
</dbReference>
<dbReference type="NCBIfam" id="TIGR01371">
    <property type="entry name" value="met_syn_B12ind"/>
    <property type="match status" value="1"/>
</dbReference>
<dbReference type="NCBIfam" id="NF003556">
    <property type="entry name" value="PRK05222.1"/>
    <property type="match status" value="1"/>
</dbReference>
<dbReference type="PANTHER" id="PTHR30519">
    <property type="entry name" value="5-METHYLTETRAHYDROPTEROYLTRIGLUTAMATE--HOMOCYSTEINE METHYLTRANSFERASE"/>
    <property type="match status" value="1"/>
</dbReference>
<dbReference type="Pfam" id="PF08267">
    <property type="entry name" value="Meth_synt_1"/>
    <property type="match status" value="1"/>
</dbReference>
<dbReference type="Pfam" id="PF01717">
    <property type="entry name" value="Meth_synt_2"/>
    <property type="match status" value="1"/>
</dbReference>
<dbReference type="PIRSF" id="PIRSF000382">
    <property type="entry name" value="MeTrfase_B12_ind"/>
    <property type="match status" value="1"/>
</dbReference>
<dbReference type="SUPFAM" id="SSF51726">
    <property type="entry name" value="UROD/MetE-like"/>
    <property type="match status" value="2"/>
</dbReference>
<sequence length="756" mass="85151">MTTSHILGFPRVGAKRELKFAQERYWRKELAEQDLLDLAKALREKNWKHQAAANADFVAVGDFTFYDHILDLQVATGAIPARFGFDSQNLTLDQYFQLARGNKDQFAIEMTKWFDTNYHYLVPEFQKSTAFKANPAHYVNQIREAKALGLNFKPVIVGPLTFLWLGKEKGEAFNRFDLLNQLVPVYVEILNALVAEGAEWIQIDEPALALDLPAEWVEAYKSVYAELSKVNAKLLLATYFGSVAEHAELLKALPVAGLHLDLVRAPEQLAAFEDYSKVLSAGVIEGRNIWRANLNKVLDVLEPLKAKLGERLWIAPSCSLLHTPFDLEVEVQLKEKNTALYSWLSFTLQKVEELNVLKQALNNGRASVQAALDASQAAADARATSKEIHRPEVAERLANLPKGADQRKSPFAERIVKQNAWLNLPLLPTTNIGSFPQTTEIRHARASFKKGELSLADYEAAMKKEIEYVVRRQEELDLDVLVHGEAERNDMVEYFGELLDGFAFTKFGWVQSYGSRCVKPPVIYGDVTRPEPMTVRWSQYAQSLTNRVMKGMLTGPVTILQWSFVRNDIPRSTVCKQIGVALSDEVLDLEAAGIKVIQIDEPAIREGLPLKRADWDAYLQWAGEAFRLSSMGVQDDTQIHTHMCYSEFNDILPAIAALDADVITIETSRSDMELLTAFADFKYPNDIGPGVYDIHSPRVPTAAEVEHLLRKALNVIPKERLWVNPDCGLKTRGWTETIDQLKVMVDVTKKLRAELA</sequence>
<comment type="function">
    <text evidence="1">Catalyzes the transfer of a methyl group from 5-methyltetrahydrofolate to homocysteine resulting in methionine formation.</text>
</comment>
<comment type="catalytic activity">
    <reaction evidence="1">
        <text>5-methyltetrahydropteroyltri-L-glutamate + L-homocysteine = tetrahydropteroyltri-L-glutamate + L-methionine</text>
        <dbReference type="Rhea" id="RHEA:21196"/>
        <dbReference type="ChEBI" id="CHEBI:57844"/>
        <dbReference type="ChEBI" id="CHEBI:58140"/>
        <dbReference type="ChEBI" id="CHEBI:58199"/>
        <dbReference type="ChEBI" id="CHEBI:58207"/>
        <dbReference type="EC" id="2.1.1.14"/>
    </reaction>
</comment>
<comment type="cofactor">
    <cofactor evidence="1">
        <name>Zn(2+)</name>
        <dbReference type="ChEBI" id="CHEBI:29105"/>
    </cofactor>
    <text evidence="1">Binds 1 zinc ion per subunit.</text>
</comment>
<comment type="pathway">
    <text evidence="1">Amino-acid biosynthesis; L-methionine biosynthesis via de novo pathway; L-methionine from L-homocysteine (MetE route): step 1/1.</text>
</comment>
<comment type="similarity">
    <text evidence="1">Belongs to the vitamin-B12 independent methionine synthase family.</text>
</comment>
<keyword id="KW-0028">Amino-acid biosynthesis</keyword>
<keyword id="KW-0479">Metal-binding</keyword>
<keyword id="KW-0486">Methionine biosynthesis</keyword>
<keyword id="KW-0489">Methyltransferase</keyword>
<keyword id="KW-0677">Repeat</keyword>
<keyword id="KW-0808">Transferase</keyword>
<keyword id="KW-0862">Zinc</keyword>
<proteinExistence type="inferred from homology"/>
<organism>
    <name type="scientific">Haemophilus influenzae (strain PittEE)</name>
    <dbReference type="NCBI Taxonomy" id="374930"/>
    <lineage>
        <taxon>Bacteria</taxon>
        <taxon>Pseudomonadati</taxon>
        <taxon>Pseudomonadota</taxon>
        <taxon>Gammaproteobacteria</taxon>
        <taxon>Pasteurellales</taxon>
        <taxon>Pasteurellaceae</taxon>
        <taxon>Haemophilus</taxon>
    </lineage>
</organism>
<protein>
    <recommendedName>
        <fullName evidence="1">5-methyltetrahydropteroyltriglutamate--homocysteine methyltransferase</fullName>
        <ecNumber evidence="1">2.1.1.14</ecNumber>
    </recommendedName>
    <alternativeName>
        <fullName evidence="1">Cobalamin-independent methionine synthase</fullName>
    </alternativeName>
    <alternativeName>
        <fullName evidence="1">Methionine synthase, vitamin-B12 independent isozyme</fullName>
    </alternativeName>
</protein>
<accession>A5UBH4</accession>
<gene>
    <name evidence="1" type="primary">metE</name>
    <name type="ordered locus">CGSHiEE_03520</name>
</gene>
<reference key="1">
    <citation type="journal article" date="2007" name="Genome Biol.">
        <title>Characterization and modeling of the Haemophilus influenzae core and supragenomes based on the complete genomic sequences of Rd and 12 clinical nontypeable strains.</title>
        <authorList>
            <person name="Hogg J.S."/>
            <person name="Hu F.Z."/>
            <person name="Janto B."/>
            <person name="Boissy R."/>
            <person name="Hayes J."/>
            <person name="Keefe R."/>
            <person name="Post J.C."/>
            <person name="Ehrlich G.D."/>
        </authorList>
    </citation>
    <scope>NUCLEOTIDE SEQUENCE [LARGE SCALE GENOMIC DNA]</scope>
    <source>
        <strain>PittEE</strain>
    </source>
</reference>
<evidence type="ECO:0000255" key="1">
    <source>
        <dbReference type="HAMAP-Rule" id="MF_00172"/>
    </source>
</evidence>
<feature type="chain" id="PRO_1000017245" description="5-methyltetrahydropteroyltriglutamate--homocysteine methyltransferase">
    <location>
        <begin position="1"/>
        <end position="756"/>
    </location>
</feature>
<feature type="active site" description="Proton donor" evidence="1">
    <location>
        <position position="695"/>
    </location>
</feature>
<feature type="binding site" evidence="1">
    <location>
        <begin position="16"/>
        <end position="19"/>
    </location>
    <ligand>
        <name>5-methyltetrahydropteroyltri-L-glutamate</name>
        <dbReference type="ChEBI" id="CHEBI:58207"/>
    </ligand>
</feature>
<feature type="binding site" evidence="1">
    <location>
        <position position="112"/>
    </location>
    <ligand>
        <name>5-methyltetrahydropteroyltri-L-glutamate</name>
        <dbReference type="ChEBI" id="CHEBI:58207"/>
    </ligand>
</feature>
<feature type="binding site" evidence="1">
    <location>
        <begin position="432"/>
        <end position="434"/>
    </location>
    <ligand>
        <name>L-homocysteine</name>
        <dbReference type="ChEBI" id="CHEBI:58199"/>
    </ligand>
</feature>
<feature type="binding site" evidence="1">
    <location>
        <begin position="432"/>
        <end position="434"/>
    </location>
    <ligand>
        <name>L-methionine</name>
        <dbReference type="ChEBI" id="CHEBI:57844"/>
    </ligand>
</feature>
<feature type="binding site" evidence="1">
    <location>
        <position position="485"/>
    </location>
    <ligand>
        <name>L-homocysteine</name>
        <dbReference type="ChEBI" id="CHEBI:58199"/>
    </ligand>
</feature>
<feature type="binding site" evidence="1">
    <location>
        <position position="485"/>
    </location>
    <ligand>
        <name>L-methionine</name>
        <dbReference type="ChEBI" id="CHEBI:57844"/>
    </ligand>
</feature>
<feature type="binding site" evidence="1">
    <location>
        <begin position="516"/>
        <end position="517"/>
    </location>
    <ligand>
        <name>5-methyltetrahydropteroyltri-L-glutamate</name>
        <dbReference type="ChEBI" id="CHEBI:58207"/>
    </ligand>
</feature>
<feature type="binding site" evidence="1">
    <location>
        <position position="562"/>
    </location>
    <ligand>
        <name>5-methyltetrahydropteroyltri-L-glutamate</name>
        <dbReference type="ChEBI" id="CHEBI:58207"/>
    </ligand>
</feature>
<feature type="binding site" evidence="1">
    <location>
        <position position="600"/>
    </location>
    <ligand>
        <name>L-homocysteine</name>
        <dbReference type="ChEBI" id="CHEBI:58199"/>
    </ligand>
</feature>
<feature type="binding site" evidence="1">
    <location>
        <position position="600"/>
    </location>
    <ligand>
        <name>L-methionine</name>
        <dbReference type="ChEBI" id="CHEBI:57844"/>
    </ligand>
</feature>
<feature type="binding site" evidence="1">
    <location>
        <position position="606"/>
    </location>
    <ligand>
        <name>5-methyltetrahydropteroyltri-L-glutamate</name>
        <dbReference type="ChEBI" id="CHEBI:58207"/>
    </ligand>
</feature>
<feature type="binding site" evidence="1">
    <location>
        <position position="642"/>
    </location>
    <ligand>
        <name>Zn(2+)</name>
        <dbReference type="ChEBI" id="CHEBI:29105"/>
        <note>catalytic</note>
    </ligand>
</feature>
<feature type="binding site" evidence="1">
    <location>
        <position position="644"/>
    </location>
    <ligand>
        <name>Zn(2+)</name>
        <dbReference type="ChEBI" id="CHEBI:29105"/>
        <note>catalytic</note>
    </ligand>
</feature>
<feature type="binding site" evidence="1">
    <location>
        <position position="666"/>
    </location>
    <ligand>
        <name>Zn(2+)</name>
        <dbReference type="ChEBI" id="CHEBI:29105"/>
        <note>catalytic</note>
    </ligand>
</feature>
<feature type="binding site" evidence="1">
    <location>
        <position position="727"/>
    </location>
    <ligand>
        <name>Zn(2+)</name>
        <dbReference type="ChEBI" id="CHEBI:29105"/>
        <note>catalytic</note>
    </ligand>
</feature>